<organism>
    <name type="scientific">Homo sapiens</name>
    <name type="common">Human</name>
    <dbReference type="NCBI Taxonomy" id="9606"/>
    <lineage>
        <taxon>Eukaryota</taxon>
        <taxon>Metazoa</taxon>
        <taxon>Chordata</taxon>
        <taxon>Craniata</taxon>
        <taxon>Vertebrata</taxon>
        <taxon>Euteleostomi</taxon>
        <taxon>Mammalia</taxon>
        <taxon>Eutheria</taxon>
        <taxon>Euarchontoglires</taxon>
        <taxon>Primates</taxon>
        <taxon>Haplorrhini</taxon>
        <taxon>Catarrhini</taxon>
        <taxon>Hominidae</taxon>
        <taxon>Homo</taxon>
    </lineage>
</organism>
<name>PYDC2_HUMAN</name>
<gene>
    <name evidence="9" type="primary">PYDC2</name>
    <name evidence="6" type="synonym">POP2</name>
</gene>
<reference key="1">
    <citation type="journal article" date="2007" name="J. Immunol.">
        <title>Pyrin-only protein 2 modulates NF-kappaB and disrupts ASC:CLR interactions.</title>
        <authorList>
            <person name="Bedoya F."/>
            <person name="Sandler L.L."/>
            <person name="Harton J.A."/>
        </authorList>
    </citation>
    <scope>NUCLEOTIDE SEQUENCE [MRNA]</scope>
    <scope>FUNCTION</scope>
    <scope>INTERACTION WITH PYCARD</scope>
    <scope>SUBCELLULAR LOCATION</scope>
    <scope>TISSUE SPECIFICITY</scope>
</reference>
<reference key="2">
    <citation type="journal article" date="2007" name="Infect. Immun.">
        <title>Cellular pyrin domain-only protein 2 is a candidate regulator of inflammasome activation.</title>
        <authorList>
            <person name="Dorfleutner A."/>
            <person name="Bryan N.B."/>
            <person name="Talbott S.J."/>
            <person name="Funya K.N."/>
            <person name="Rellick S.L."/>
            <person name="Reed J.C."/>
            <person name="Shi X."/>
            <person name="Rojanasakul Y."/>
            <person name="Flynn D.C."/>
            <person name="Stehlik C."/>
        </authorList>
    </citation>
    <scope>FUNCTION</scope>
    <scope>INTERACTION WITH NLRP2 AND PYCARD</scope>
    <scope>SUBCELLULAR LOCATION</scope>
</reference>
<reference key="3">
    <citation type="journal article" date="2011" name="BMC Evol. Biol.">
        <title>Recent evolution of the NF-kappaB and inflammasome regulating protein POP2 in primates.</title>
        <authorList>
            <person name="Atianand M.K."/>
            <person name="Fuchs T."/>
            <person name="Harton J.A."/>
        </authorList>
    </citation>
    <scope>CAUTION</scope>
</reference>
<reference key="4">
    <citation type="journal article" date="2014" name="Genes Immun.">
        <title>The CLRX.1/NOD24 (NLRP2P) pseudogene codes a functional negative regulator of NF-kappaB, pyrin-only protein 4.</title>
        <authorList>
            <person name="Porter K.A."/>
            <person name="Duffy E.B."/>
            <person name="Nyland P."/>
            <person name="Atianand M.K."/>
            <person name="Sharifi H."/>
            <person name="Harton J.A."/>
        </authorList>
    </citation>
    <scope>FUNCTION</scope>
</reference>
<keyword id="KW-0963">Cytoplasm</keyword>
<keyword id="KW-0391">Immunity</keyword>
<keyword id="KW-0395">Inflammatory response</keyword>
<keyword id="KW-0399">Innate immunity</keyword>
<keyword id="KW-0539">Nucleus</keyword>
<keyword id="KW-1185">Reference proteome</keyword>
<keyword id="KW-0734">Signal transduction inhibitor</keyword>
<proteinExistence type="evidence at protein level"/>
<accession>Q56P42</accession>
<protein>
    <recommendedName>
        <fullName evidence="8">Pyrin domain-containing protein 2</fullName>
    </recommendedName>
    <alternativeName>
        <fullName evidence="6">Pyrin-only protein 2</fullName>
    </alternativeName>
    <alternativeName>
        <fullName evidence="5">cellular POP2</fullName>
        <shortName evidence="5">cPOP2</shortName>
    </alternativeName>
</protein>
<comment type="function">
    <text evidence="2 3 4">May play a role in innate immunity by disrupting the interaction between PYCARD and NLRP3, thereby regulating the NLRP3 inflammasome (PubMed:17178784, PubMed:17339483). May also inhibit NF-kappa-B signaling distally by affecting the nuclear accumulation of RELA (PubMed:17339483, PubMed:24871464).</text>
</comment>
<comment type="subunit">
    <text evidence="2 3">Interacts with PYCARD/ASC (via pyrin domain) (PubMed:17178784, PubMed:17339483). Interacts with NLRP2 (via pyrin domain) (PubMed:17178784).</text>
</comment>
<comment type="interaction">
    <interactant intactId="EBI-6374418">
        <id>Q56P42</id>
    </interactant>
    <interactant intactId="EBI-6374482">
        <id>Q9NX02</id>
        <label>NLRP2</label>
    </interactant>
    <organismsDiffer>false</organismsDiffer>
    <experiments>6</experiments>
</comment>
<comment type="interaction">
    <interactant intactId="EBI-6374418">
        <id>Q56P42</id>
    </interactant>
    <interactant intactId="EBI-751215">
        <id>Q9ULZ3</id>
        <label>PYCARD</label>
    </interactant>
    <organismsDiffer>false</organismsDiffer>
    <experiments>4</experiments>
</comment>
<comment type="subcellular location">
    <subcellularLocation>
        <location evidence="2 3">Cytoplasm</location>
    </subcellularLocation>
    <subcellularLocation>
        <location evidence="2 3">Nucleus</location>
    </subcellularLocation>
    <text evidence="2">Recruited to specks formed by PYCARD within the cytoplasm.</text>
</comment>
<comment type="tissue specificity">
    <text evidence="3">Predominantly expressed in peripheral blood. Weakly expressed in testis.</text>
</comment>
<comment type="caution">
    <text evidence="7">Absent from the genome of domestic mammals and New World monkeys it is found in the genome of hominids and Old World monkeys. Likely derived from retrogene insertion of an NLRP2/NLRP7-like gene, it has probably arisen recently in the mammalian genomes where it is under purifying selection.</text>
</comment>
<feature type="chain" id="PRO_0000348427" description="Pyrin domain-containing protein 2">
    <location>
        <begin position="1"/>
        <end position="97"/>
    </location>
</feature>
<feature type="domain" description="Pyrin" evidence="1">
    <location>
        <begin position="1"/>
        <end position="94"/>
    </location>
</feature>
<feature type="sequence variant" id="VAR_046150" description="In dbSNP:rs293833.">
    <original>Q</original>
    <variation>R</variation>
    <location>
        <position position="81"/>
    </location>
</feature>
<sequence>MASSAELDFNLQALLEQLSQDELSKFKSLIRTISLGKELQTVPQTEVDKANGKQLVEIFTSHSCSYWAGMAAIQVFEKMNQTHLSGRADEHCVMPPP</sequence>
<evidence type="ECO:0000255" key="1">
    <source>
        <dbReference type="PROSITE-ProRule" id="PRU00061"/>
    </source>
</evidence>
<evidence type="ECO:0000269" key="2">
    <source>
    </source>
</evidence>
<evidence type="ECO:0000269" key="3">
    <source>
    </source>
</evidence>
<evidence type="ECO:0000269" key="4">
    <source>
    </source>
</evidence>
<evidence type="ECO:0000303" key="5">
    <source>
    </source>
</evidence>
<evidence type="ECO:0000303" key="6">
    <source>
    </source>
</evidence>
<evidence type="ECO:0000303" key="7">
    <source>
    </source>
</evidence>
<evidence type="ECO:0000305" key="8"/>
<evidence type="ECO:0000312" key="9">
    <source>
        <dbReference type="HGNC" id="HGNC:33512"/>
    </source>
</evidence>
<dbReference type="EMBL" id="AY858112">
    <property type="protein sequence ID" value="AAX54598.1"/>
    <property type="molecule type" value="mRNA"/>
</dbReference>
<dbReference type="RefSeq" id="NP_001076777.1">
    <property type="nucleotide sequence ID" value="NM_001083308.1"/>
</dbReference>
<dbReference type="SMR" id="Q56P42"/>
<dbReference type="FunCoup" id="Q56P42">
    <property type="interactions" value="185"/>
</dbReference>
<dbReference type="IntAct" id="Q56P42">
    <property type="interactions" value="5"/>
</dbReference>
<dbReference type="STRING" id="9606.ENSP00000492367"/>
<dbReference type="BioMuta" id="PYDC2"/>
<dbReference type="DMDM" id="74721597"/>
<dbReference type="MassIVE" id="Q56P42"/>
<dbReference type="PaxDb" id="9606-ENSP00000428325"/>
<dbReference type="PeptideAtlas" id="Q56P42"/>
<dbReference type="Antibodypedia" id="65933">
    <property type="antibodies" value="5 antibodies from 3 providers"/>
</dbReference>
<dbReference type="DNASU" id="152138"/>
<dbReference type="Ensembl" id="ENST00000518817.1">
    <property type="protein sequence ID" value="ENSP00000492367.1"/>
    <property type="gene ID" value="ENSG00000253548.1"/>
</dbReference>
<dbReference type="GeneID" id="152138"/>
<dbReference type="KEGG" id="hsa:152138"/>
<dbReference type="MANE-Select" id="ENST00000518817.1">
    <property type="protein sequence ID" value="ENSP00000492367.1"/>
    <property type="RefSeq nucleotide sequence ID" value="NM_001083308.1"/>
    <property type="RefSeq protein sequence ID" value="NP_001076777.1"/>
</dbReference>
<dbReference type="UCSC" id="uc011bso.2">
    <property type="organism name" value="human"/>
</dbReference>
<dbReference type="AGR" id="HGNC:33512"/>
<dbReference type="CTD" id="152138"/>
<dbReference type="DisGeNET" id="152138"/>
<dbReference type="GeneCards" id="PYDC2"/>
<dbReference type="HGNC" id="HGNC:33512">
    <property type="gene designation" value="PYDC2"/>
</dbReference>
<dbReference type="HPA" id="ENSG00000253548">
    <property type="expression patterns" value="Not detected"/>
</dbReference>
<dbReference type="MIM" id="615701">
    <property type="type" value="gene"/>
</dbReference>
<dbReference type="neXtProt" id="NX_Q56P42"/>
<dbReference type="PharmGKB" id="PA162400524"/>
<dbReference type="VEuPathDB" id="HostDB:ENSG00000253548"/>
<dbReference type="eggNOG" id="ENOG502TEGC">
    <property type="taxonomic scope" value="Eukaryota"/>
</dbReference>
<dbReference type="GeneTree" id="ENSGT00940000161714"/>
<dbReference type="HOGENOM" id="CLU_174141_0_0_1"/>
<dbReference type="InParanoid" id="Q56P42"/>
<dbReference type="OMA" id="KMNETHL"/>
<dbReference type="OrthoDB" id="9479775at2759"/>
<dbReference type="PAN-GO" id="Q56P42">
    <property type="GO annotations" value="5 GO annotations based on evolutionary models"/>
</dbReference>
<dbReference type="PhylomeDB" id="Q56P42"/>
<dbReference type="PathwayCommons" id="Q56P42"/>
<dbReference type="SignaLink" id="Q56P42"/>
<dbReference type="BioGRID-ORCS" id="152138">
    <property type="hits" value="4 hits in 300 CRISPR screens"/>
</dbReference>
<dbReference type="GenomeRNAi" id="152138"/>
<dbReference type="Pharos" id="Q56P42">
    <property type="development level" value="Tbio"/>
</dbReference>
<dbReference type="PRO" id="PR:Q56P42"/>
<dbReference type="Proteomes" id="UP000005640">
    <property type="component" value="Chromosome 3"/>
</dbReference>
<dbReference type="RNAct" id="Q56P42">
    <property type="molecule type" value="protein"/>
</dbReference>
<dbReference type="Bgee" id="ENSG00000253548">
    <property type="expression patterns" value="Expressed in primordial germ cell in gonad and 28 other cell types or tissues"/>
</dbReference>
<dbReference type="GO" id="GO:0005737">
    <property type="term" value="C:cytoplasm"/>
    <property type="evidence" value="ECO:0000314"/>
    <property type="project" value="UniProtKB"/>
</dbReference>
<dbReference type="GO" id="GO:0005829">
    <property type="term" value="C:cytosol"/>
    <property type="evidence" value="ECO:0000314"/>
    <property type="project" value="HPA"/>
</dbReference>
<dbReference type="GO" id="GO:0005730">
    <property type="term" value="C:nucleolus"/>
    <property type="evidence" value="ECO:0000314"/>
    <property type="project" value="HPA"/>
</dbReference>
<dbReference type="GO" id="GO:0005654">
    <property type="term" value="C:nucleoplasm"/>
    <property type="evidence" value="ECO:0000314"/>
    <property type="project" value="HPA"/>
</dbReference>
<dbReference type="GO" id="GO:0005634">
    <property type="term" value="C:nucleus"/>
    <property type="evidence" value="ECO:0000314"/>
    <property type="project" value="UniProtKB"/>
</dbReference>
<dbReference type="GO" id="GO:0006954">
    <property type="term" value="P:inflammatory response"/>
    <property type="evidence" value="ECO:0007669"/>
    <property type="project" value="UniProtKB-KW"/>
</dbReference>
<dbReference type="GO" id="GO:0045087">
    <property type="term" value="P:innate immune response"/>
    <property type="evidence" value="ECO:0007669"/>
    <property type="project" value="UniProtKB-KW"/>
</dbReference>
<dbReference type="GO" id="GO:0050728">
    <property type="term" value="P:negative regulation of inflammatory response"/>
    <property type="evidence" value="ECO:0000315"/>
    <property type="project" value="UniProtKB"/>
</dbReference>
<dbReference type="GO" id="GO:0032691">
    <property type="term" value="P:negative regulation of interleukin-1 beta production"/>
    <property type="evidence" value="ECO:0000315"/>
    <property type="project" value="UniProtKB"/>
</dbReference>
<dbReference type="GO" id="GO:0032088">
    <property type="term" value="P:negative regulation of NF-kappaB transcription factor activity"/>
    <property type="evidence" value="ECO:0000315"/>
    <property type="project" value="UniProtKB"/>
</dbReference>
<dbReference type="GO" id="GO:1900226">
    <property type="term" value="P:negative regulation of NLRP3 inflammasome complex assembly"/>
    <property type="evidence" value="ECO:0000315"/>
    <property type="project" value="UniProtKB"/>
</dbReference>
<dbReference type="GO" id="GO:1901223">
    <property type="term" value="P:negative regulation of non-canonical NF-kappaB signal transduction"/>
    <property type="evidence" value="ECO:0000315"/>
    <property type="project" value="UniProtKB"/>
</dbReference>
<dbReference type="GO" id="GO:0010804">
    <property type="term" value="P:negative regulation of tumor necrosis factor-mediated signaling pathway"/>
    <property type="evidence" value="ECO:0000315"/>
    <property type="project" value="UniProtKB"/>
</dbReference>
<dbReference type="CDD" id="cd08320">
    <property type="entry name" value="Pyrin_NALPs"/>
    <property type="match status" value="1"/>
</dbReference>
<dbReference type="FunFam" id="1.10.533.10:FF:000067">
    <property type="entry name" value="NLR family pyrin domain containing 2"/>
    <property type="match status" value="1"/>
</dbReference>
<dbReference type="Gene3D" id="1.10.533.10">
    <property type="entry name" value="Death Domain, Fas"/>
    <property type="match status" value="1"/>
</dbReference>
<dbReference type="InterPro" id="IPR004020">
    <property type="entry name" value="DAPIN"/>
</dbReference>
<dbReference type="InterPro" id="IPR011029">
    <property type="entry name" value="DEATH-like_dom_sf"/>
</dbReference>
<dbReference type="Pfam" id="PF02758">
    <property type="entry name" value="PYRIN"/>
    <property type="match status" value="1"/>
</dbReference>
<dbReference type="SMART" id="SM01289">
    <property type="entry name" value="PYRIN"/>
    <property type="match status" value="1"/>
</dbReference>
<dbReference type="SUPFAM" id="SSF47986">
    <property type="entry name" value="DEATH domain"/>
    <property type="match status" value="1"/>
</dbReference>
<dbReference type="PROSITE" id="PS50824">
    <property type="entry name" value="DAPIN"/>
    <property type="match status" value="1"/>
</dbReference>